<proteinExistence type="evidence at transcript level"/>
<keyword id="KW-1003">Cell membrane</keyword>
<keyword id="KW-1015">Disulfide bond</keyword>
<keyword id="KW-0297">G-protein coupled receptor</keyword>
<keyword id="KW-0325">Glycoprotein</keyword>
<keyword id="KW-0472">Membrane</keyword>
<keyword id="KW-0552">Olfaction</keyword>
<keyword id="KW-0675">Receptor</keyword>
<keyword id="KW-1185">Reference proteome</keyword>
<keyword id="KW-0716">Sensory transduction</keyword>
<keyword id="KW-0807">Transducer</keyword>
<keyword id="KW-0812">Transmembrane</keyword>
<keyword id="KW-1133">Transmembrane helix</keyword>
<dbReference type="EMBL" id="AB065798">
    <property type="protein sequence ID" value="BAC06017.1"/>
    <property type="molecule type" value="Genomic_DNA"/>
</dbReference>
<dbReference type="EMBL" id="BC140757">
    <property type="protein sequence ID" value="AAI40758.1"/>
    <property type="molecule type" value="mRNA"/>
</dbReference>
<dbReference type="CCDS" id="CCDS31367.1"/>
<dbReference type="RefSeq" id="NP_001005329.1">
    <property type="nucleotide sequence ID" value="NM_001005329.2"/>
</dbReference>
<dbReference type="SMR" id="Q8NGJ6"/>
<dbReference type="BioGRID" id="135198">
    <property type="interactions" value="1"/>
</dbReference>
<dbReference type="FunCoup" id="Q8NGJ6">
    <property type="interactions" value="466"/>
</dbReference>
<dbReference type="STRING" id="9606.ENSP00000492963"/>
<dbReference type="GlyCosmos" id="Q8NGJ6">
    <property type="glycosylation" value="1 site, No reported glycans"/>
</dbReference>
<dbReference type="GlyGen" id="Q8NGJ6">
    <property type="glycosylation" value="1 site"/>
</dbReference>
<dbReference type="iPTMnet" id="Q8NGJ6"/>
<dbReference type="PhosphoSitePlus" id="Q8NGJ6"/>
<dbReference type="BioMuta" id="OR51A4"/>
<dbReference type="DMDM" id="38372708"/>
<dbReference type="jPOST" id="Q8NGJ6"/>
<dbReference type="PaxDb" id="9606-ENSP00000369731"/>
<dbReference type="Antibodypedia" id="57568">
    <property type="antibodies" value="43 antibodies from 15 providers"/>
</dbReference>
<dbReference type="DNASU" id="401666"/>
<dbReference type="Ensembl" id="ENST00000641898.1">
    <property type="protein sequence ID" value="ENSP00000492963.1"/>
    <property type="gene ID" value="ENSG00000205497.5"/>
</dbReference>
<dbReference type="GeneID" id="401666"/>
<dbReference type="KEGG" id="hsa:401666"/>
<dbReference type="MANE-Select" id="ENST00000641898.1">
    <property type="protein sequence ID" value="ENSP00000492963.1"/>
    <property type="RefSeq nucleotide sequence ID" value="NM_001005329.2"/>
    <property type="RefSeq protein sequence ID" value="NP_001005329.1"/>
</dbReference>
<dbReference type="UCSC" id="uc010qys.2">
    <property type="organism name" value="human"/>
</dbReference>
<dbReference type="AGR" id="HGNC:14795"/>
<dbReference type="CTD" id="401666"/>
<dbReference type="DisGeNET" id="401666"/>
<dbReference type="GeneCards" id="OR51A4"/>
<dbReference type="HGNC" id="HGNC:14795">
    <property type="gene designation" value="OR51A4"/>
</dbReference>
<dbReference type="HPA" id="ENSG00000205497">
    <property type="expression patterns" value="Not detected"/>
</dbReference>
<dbReference type="neXtProt" id="NX_Q8NGJ6"/>
<dbReference type="OpenTargets" id="ENSG00000205497"/>
<dbReference type="PharmGKB" id="PA32357"/>
<dbReference type="VEuPathDB" id="HostDB:ENSG00000205497"/>
<dbReference type="eggNOG" id="ENOG502RU39">
    <property type="taxonomic scope" value="Eukaryota"/>
</dbReference>
<dbReference type="GeneTree" id="ENSGT01130000278286"/>
<dbReference type="HOGENOM" id="CLU_012526_0_0_1"/>
<dbReference type="InParanoid" id="Q8NGJ6"/>
<dbReference type="OMA" id="KYCNKSQ"/>
<dbReference type="OrthoDB" id="9444602at2759"/>
<dbReference type="PAN-GO" id="Q8NGJ6">
    <property type="GO annotations" value="2 GO annotations based on evolutionary models"/>
</dbReference>
<dbReference type="PhylomeDB" id="Q8NGJ6"/>
<dbReference type="TreeFam" id="TF342735"/>
<dbReference type="PathwayCommons" id="Q8NGJ6"/>
<dbReference type="Reactome" id="R-HSA-9752946">
    <property type="pathway name" value="Expression and translocation of olfactory receptors"/>
</dbReference>
<dbReference type="BioGRID-ORCS" id="401666">
    <property type="hits" value="9 hits in 706 CRISPR screens"/>
</dbReference>
<dbReference type="GenomeRNAi" id="401666"/>
<dbReference type="Pharos" id="Q8NGJ6">
    <property type="development level" value="Tdark"/>
</dbReference>
<dbReference type="PRO" id="PR:Q8NGJ6"/>
<dbReference type="Proteomes" id="UP000005640">
    <property type="component" value="Chromosome 11"/>
</dbReference>
<dbReference type="RNAct" id="Q8NGJ6">
    <property type="molecule type" value="protein"/>
</dbReference>
<dbReference type="GO" id="GO:0005886">
    <property type="term" value="C:plasma membrane"/>
    <property type="evidence" value="ECO:0000318"/>
    <property type="project" value="GO_Central"/>
</dbReference>
<dbReference type="GO" id="GO:0004930">
    <property type="term" value="F:G protein-coupled receptor activity"/>
    <property type="evidence" value="ECO:0007669"/>
    <property type="project" value="UniProtKB-KW"/>
</dbReference>
<dbReference type="GO" id="GO:0004984">
    <property type="term" value="F:olfactory receptor activity"/>
    <property type="evidence" value="ECO:0000318"/>
    <property type="project" value="GO_Central"/>
</dbReference>
<dbReference type="CDD" id="cd15222">
    <property type="entry name" value="7tmA_OR51-like"/>
    <property type="match status" value="1"/>
</dbReference>
<dbReference type="FunFam" id="1.20.1070.10:FF:000002">
    <property type="entry name" value="Olfactory receptor"/>
    <property type="match status" value="1"/>
</dbReference>
<dbReference type="Gene3D" id="1.20.1070.10">
    <property type="entry name" value="Rhodopsin 7-helix transmembrane proteins"/>
    <property type="match status" value="1"/>
</dbReference>
<dbReference type="InterPro" id="IPR000276">
    <property type="entry name" value="GPCR_Rhodpsn"/>
</dbReference>
<dbReference type="InterPro" id="IPR017452">
    <property type="entry name" value="GPCR_Rhodpsn_7TM"/>
</dbReference>
<dbReference type="InterPro" id="IPR000725">
    <property type="entry name" value="Olfact_rcpt"/>
</dbReference>
<dbReference type="InterPro" id="IPR050402">
    <property type="entry name" value="OR51/52/56-like"/>
</dbReference>
<dbReference type="PANTHER" id="PTHR26450:SF168">
    <property type="entry name" value="OLFACTORY RECEPTOR 51A2-RELATED"/>
    <property type="match status" value="1"/>
</dbReference>
<dbReference type="PANTHER" id="PTHR26450">
    <property type="entry name" value="OLFACTORY RECEPTOR 56B1-RELATED"/>
    <property type="match status" value="1"/>
</dbReference>
<dbReference type="Pfam" id="PF13853">
    <property type="entry name" value="7tm_4"/>
    <property type="match status" value="1"/>
</dbReference>
<dbReference type="PRINTS" id="PR00237">
    <property type="entry name" value="GPCRRHODOPSN"/>
</dbReference>
<dbReference type="PRINTS" id="PR00245">
    <property type="entry name" value="OLFACTORYR"/>
</dbReference>
<dbReference type="SMART" id="SM01381">
    <property type="entry name" value="7TM_GPCR_Srsx"/>
    <property type="match status" value="1"/>
</dbReference>
<dbReference type="SUPFAM" id="SSF81321">
    <property type="entry name" value="Family A G protein-coupled receptor-like"/>
    <property type="match status" value="1"/>
</dbReference>
<dbReference type="PROSITE" id="PS00237">
    <property type="entry name" value="G_PROTEIN_RECEP_F1_1"/>
    <property type="match status" value="1"/>
</dbReference>
<dbReference type="PROSITE" id="PS50262">
    <property type="entry name" value="G_PROTEIN_RECEP_F1_2"/>
    <property type="match status" value="1"/>
</dbReference>
<evidence type="ECO:0000255" key="1"/>
<evidence type="ECO:0000255" key="2">
    <source>
        <dbReference type="PROSITE-ProRule" id="PRU00521"/>
    </source>
</evidence>
<evidence type="ECO:0000269" key="3">
    <source>
    </source>
</evidence>
<evidence type="ECO:0000305" key="4"/>
<feature type="chain" id="PRO_0000150743" description="Olfactory receptor 51A4">
    <location>
        <begin position="1"/>
        <end position="313"/>
    </location>
</feature>
<feature type="topological domain" description="Extracellular" evidence="1">
    <location>
        <begin position="1"/>
        <end position="27"/>
    </location>
</feature>
<feature type="transmembrane region" description="Helical; Name=1" evidence="1">
    <location>
        <begin position="28"/>
        <end position="48"/>
    </location>
</feature>
<feature type="topological domain" description="Cytoplasmic" evidence="1">
    <location>
        <begin position="49"/>
        <end position="56"/>
    </location>
</feature>
<feature type="transmembrane region" description="Helical; Name=2" evidence="1">
    <location>
        <begin position="57"/>
        <end position="77"/>
    </location>
</feature>
<feature type="topological domain" description="Extracellular" evidence="1">
    <location>
        <begin position="78"/>
        <end position="101"/>
    </location>
</feature>
<feature type="transmembrane region" description="Helical; Name=3" evidence="1">
    <location>
        <begin position="102"/>
        <end position="122"/>
    </location>
</feature>
<feature type="topological domain" description="Cytoplasmic" evidence="1">
    <location>
        <begin position="123"/>
        <end position="141"/>
    </location>
</feature>
<feature type="transmembrane region" description="Helical; Name=4" evidence="1">
    <location>
        <begin position="142"/>
        <end position="162"/>
    </location>
</feature>
<feature type="topological domain" description="Extracellular" evidence="1">
    <location>
        <begin position="163"/>
        <end position="198"/>
    </location>
</feature>
<feature type="transmembrane region" description="Helical; Name=5" evidence="1">
    <location>
        <begin position="199"/>
        <end position="218"/>
    </location>
</feature>
<feature type="topological domain" description="Cytoplasmic" evidence="1">
    <location>
        <begin position="219"/>
        <end position="238"/>
    </location>
</feature>
<feature type="transmembrane region" description="Helical; Name=6" evidence="1">
    <location>
        <begin position="239"/>
        <end position="259"/>
    </location>
</feature>
<feature type="topological domain" description="Extracellular" evidence="1">
    <location>
        <begin position="260"/>
        <end position="274"/>
    </location>
</feature>
<feature type="transmembrane region" description="Helical; Name=7" evidence="1">
    <location>
        <begin position="275"/>
        <end position="295"/>
    </location>
</feature>
<feature type="topological domain" description="Cytoplasmic" evidence="1">
    <location>
        <begin position="296"/>
        <end position="313"/>
    </location>
</feature>
<feature type="glycosylation site" description="N-linked (GlcNAc...) asparagine" evidence="1">
    <location>
        <position position="5"/>
    </location>
</feature>
<feature type="disulfide bond" evidence="2">
    <location>
        <begin position="99"/>
        <end position="191"/>
    </location>
</feature>
<feature type="sequence variant" id="VAR_062076" description="In dbSNP:rs3845246." evidence="3">
    <original>G</original>
    <variation>C</variation>
    <location>
        <position position="45"/>
    </location>
</feature>
<feature type="sequence variant" id="VAR_053306" description="In dbSNP:rs2412467.">
    <original>D</original>
    <variation>N</variation>
    <location>
        <position position="72"/>
    </location>
</feature>
<feature type="sequence variant" id="VAR_034313" description="In dbSNP:rs2595988.">
    <original>R</original>
    <variation>G</variation>
    <location>
        <position position="267"/>
    </location>
</feature>
<feature type="sequence variant" id="VAR_034314" description="In dbSNP:rs28698374." evidence="3">
    <original>T</original>
    <variation>M</variation>
    <location>
        <position position="288"/>
    </location>
</feature>
<feature type="sequence variant" id="VAR_062077" description="In dbSNP:rs2436782.">
    <original>R</original>
    <variation>W</variation>
    <location>
        <position position="311"/>
    </location>
</feature>
<name>O51A4_HUMAN</name>
<protein>
    <recommendedName>
        <fullName>Olfactory receptor 51A4</fullName>
    </recommendedName>
</protein>
<reference key="1">
    <citation type="submission" date="2001-07" db="EMBL/GenBank/DDBJ databases">
        <title>Genome-wide discovery and analysis of human seven transmembrane helix receptor genes.</title>
        <authorList>
            <person name="Suwa M."/>
            <person name="Sato T."/>
            <person name="Okouchi I."/>
            <person name="Arita M."/>
            <person name="Futami K."/>
            <person name="Matsumoto S."/>
            <person name="Tsutsumi S."/>
            <person name="Aburatani H."/>
            <person name="Asai K."/>
            <person name="Akiyama Y."/>
        </authorList>
    </citation>
    <scope>NUCLEOTIDE SEQUENCE [GENOMIC DNA]</scope>
</reference>
<reference key="2">
    <citation type="journal article" date="2004" name="Genome Res.">
        <title>The status, quality, and expansion of the NIH full-length cDNA project: the Mammalian Gene Collection (MGC).</title>
        <authorList>
            <consortium name="The MGC Project Team"/>
        </authorList>
    </citation>
    <scope>NUCLEOTIDE SEQUENCE [LARGE SCALE MRNA]</scope>
    <scope>VARIANTS CYS-45 AND MET-288</scope>
</reference>
<comment type="function">
    <text evidence="4">Odorant receptor.</text>
</comment>
<comment type="subcellular location">
    <subcellularLocation>
        <location>Cell membrane</location>
        <topology>Multi-pass membrane protein</topology>
    </subcellularLocation>
</comment>
<comment type="similarity">
    <text evidence="2">Belongs to the G-protein coupled receptor 1 family.</text>
</comment>
<comment type="online information" name="Human Olfactory Receptor Data Exploratorium (HORDE)">
    <link uri="http://genome.weizmann.ac.il/horde/card/index/symbol:OR51A4"/>
</comment>
<accession>Q8NGJ6</accession>
<accession>B9EIP2</accession>
<gene>
    <name type="primary">OR51A4</name>
</gene>
<sequence length="313" mass="35256">MSIINTSYVEITTFFLVGMPGLEYAHIWISIPICSMYLIAILGNGTILFIIKTEPSLHEPMYYFLSMLAMSDLGLSLSSLPTVLSIFLFNAPEISSNACFAQEFFIHGFSVLESSVLLIMSFDRFLAIHNPLRYTSILTTVRVAQIGIVFSFKSMLLVLPFPFTLRNLRYCKKNQLSHSYCLHQDVMKLACSDNRIDVIYGFFGALCLMVDFILIAVSYTLILKTVLGIASKKEQLKALNTCVSHICAVIIFYLPIINLAVVHRFARHVSPLINVLMANVLLLVPPLTNPIVYCVKTKQIRVRVVAKLCQRKI</sequence>
<organism>
    <name type="scientific">Homo sapiens</name>
    <name type="common">Human</name>
    <dbReference type="NCBI Taxonomy" id="9606"/>
    <lineage>
        <taxon>Eukaryota</taxon>
        <taxon>Metazoa</taxon>
        <taxon>Chordata</taxon>
        <taxon>Craniata</taxon>
        <taxon>Vertebrata</taxon>
        <taxon>Euteleostomi</taxon>
        <taxon>Mammalia</taxon>
        <taxon>Eutheria</taxon>
        <taxon>Euarchontoglires</taxon>
        <taxon>Primates</taxon>
        <taxon>Haplorrhini</taxon>
        <taxon>Catarrhini</taxon>
        <taxon>Hominidae</taxon>
        <taxon>Homo</taxon>
    </lineage>
</organism>